<name>PETG_OSTTA</name>
<keyword id="KW-0150">Chloroplast</keyword>
<keyword id="KW-0249">Electron transport</keyword>
<keyword id="KW-0472">Membrane</keyword>
<keyword id="KW-0602">Photosynthesis</keyword>
<keyword id="KW-0934">Plastid</keyword>
<keyword id="KW-1185">Reference proteome</keyword>
<keyword id="KW-0793">Thylakoid</keyword>
<keyword id="KW-0812">Transmembrane</keyword>
<keyword id="KW-1133">Transmembrane helix</keyword>
<keyword id="KW-0813">Transport</keyword>
<sequence>MVETLLSGIVLGLMPVTLAGLFTTAYLQYRRGDQLNL</sequence>
<proteinExistence type="inferred from homology"/>
<accession>Q0P3J2</accession>
<dbReference type="EMBL" id="CR954199">
    <property type="protein sequence ID" value="CAL36385.1"/>
    <property type="molecule type" value="Genomic_DNA"/>
</dbReference>
<dbReference type="RefSeq" id="YP_717263.1">
    <property type="nucleotide sequence ID" value="NC_008289.1"/>
</dbReference>
<dbReference type="SMR" id="Q0P3J2"/>
<dbReference type="FunCoup" id="Q0P3J2">
    <property type="interactions" value="32"/>
</dbReference>
<dbReference type="STRING" id="70448.Q0P3J2"/>
<dbReference type="GeneID" id="4238839"/>
<dbReference type="KEGG" id="ota:OstapCp60"/>
<dbReference type="eggNOG" id="ENOG502SD3G">
    <property type="taxonomic scope" value="Eukaryota"/>
</dbReference>
<dbReference type="InParanoid" id="Q0P3J2"/>
<dbReference type="Proteomes" id="UP000009170">
    <property type="component" value="Chloroplast"/>
</dbReference>
<dbReference type="GO" id="GO:0009535">
    <property type="term" value="C:chloroplast thylakoid membrane"/>
    <property type="evidence" value="ECO:0007669"/>
    <property type="project" value="UniProtKB-SubCell"/>
</dbReference>
<dbReference type="GO" id="GO:0009512">
    <property type="term" value="C:cytochrome b6f complex"/>
    <property type="evidence" value="ECO:0007669"/>
    <property type="project" value="InterPro"/>
</dbReference>
<dbReference type="GO" id="GO:0045158">
    <property type="term" value="F:electron transporter, transferring electrons within cytochrome b6/f complex of photosystem II activity"/>
    <property type="evidence" value="ECO:0007669"/>
    <property type="project" value="UniProtKB-UniRule"/>
</dbReference>
<dbReference type="GO" id="GO:0017004">
    <property type="term" value="P:cytochrome complex assembly"/>
    <property type="evidence" value="ECO:0007669"/>
    <property type="project" value="UniProtKB-UniRule"/>
</dbReference>
<dbReference type="GO" id="GO:0015979">
    <property type="term" value="P:photosynthesis"/>
    <property type="evidence" value="ECO:0007669"/>
    <property type="project" value="UniProtKB-KW"/>
</dbReference>
<dbReference type="HAMAP" id="MF_00432">
    <property type="entry name" value="Cytb6_f_PetG"/>
    <property type="match status" value="1"/>
</dbReference>
<dbReference type="InterPro" id="IPR003683">
    <property type="entry name" value="Cyt_6/f_cplx_su5"/>
</dbReference>
<dbReference type="InterPro" id="IPR036099">
    <property type="entry name" value="Cyt_6/f_cplx_su5_sf"/>
</dbReference>
<dbReference type="NCBIfam" id="NF001907">
    <property type="entry name" value="PRK00665.1"/>
    <property type="match status" value="1"/>
</dbReference>
<dbReference type="Pfam" id="PF02529">
    <property type="entry name" value="PetG"/>
    <property type="match status" value="1"/>
</dbReference>
<dbReference type="PIRSF" id="PIRSF000034">
    <property type="entry name" value="Cyt_b6-f_V"/>
    <property type="match status" value="1"/>
</dbReference>
<dbReference type="SUPFAM" id="SSF103446">
    <property type="entry name" value="PetG subunit of the cytochrome b6f complex"/>
    <property type="match status" value="1"/>
</dbReference>
<organism>
    <name type="scientific">Ostreococcus tauri</name>
    <dbReference type="NCBI Taxonomy" id="70448"/>
    <lineage>
        <taxon>Eukaryota</taxon>
        <taxon>Viridiplantae</taxon>
        <taxon>Chlorophyta</taxon>
        <taxon>Mamiellophyceae</taxon>
        <taxon>Mamiellales</taxon>
        <taxon>Bathycoccaceae</taxon>
        <taxon>Ostreococcus</taxon>
    </lineage>
</organism>
<comment type="function">
    <text evidence="1">Component of the cytochrome b6-f complex, which mediates electron transfer between photosystem II (PSII) and photosystem I (PSI), cyclic electron flow around PSI, and state transitions. PetG is required for either the stability or assembly of the cytochrome b6-f complex.</text>
</comment>
<comment type="subunit">
    <text evidence="1">The 4 large subunits of the cytochrome b6-f complex are cytochrome b6, subunit IV (17 kDa polypeptide, PetD), cytochrome f and the Rieske protein, while the 4 small subunits are PetG, PetL, PetM and PetN. The complex functions as a dimer.</text>
</comment>
<comment type="subcellular location">
    <subcellularLocation>
        <location evidence="1">Plastid</location>
        <location evidence="1">Chloroplast thylakoid membrane</location>
        <topology evidence="1">Single-pass membrane protein</topology>
    </subcellularLocation>
</comment>
<comment type="similarity">
    <text evidence="1">Belongs to the PetG family.</text>
</comment>
<feature type="chain" id="PRO_0000275500" description="Cytochrome b6-f complex subunit 5">
    <location>
        <begin position="1"/>
        <end position="37"/>
    </location>
</feature>
<feature type="transmembrane region" description="Helical" evidence="1">
    <location>
        <begin position="5"/>
        <end position="25"/>
    </location>
</feature>
<reference key="1">
    <citation type="journal article" date="2007" name="Mol. Biol. Evol.">
        <title>The complete chloroplast and mitochondrial DNA sequence of Ostreococcus tauri: organelle genomes of the smallest eukaryote are examples of compaction.</title>
        <authorList>
            <person name="Robbens S."/>
            <person name="Derelle E."/>
            <person name="Ferraz C."/>
            <person name="Wuyts J."/>
            <person name="Moreau H."/>
            <person name="Van de Peer Y."/>
        </authorList>
    </citation>
    <scope>NUCLEOTIDE SEQUENCE [LARGE SCALE GENOMIC DNA]</scope>
    <source>
        <strain>OTTH0595</strain>
    </source>
</reference>
<evidence type="ECO:0000255" key="1">
    <source>
        <dbReference type="HAMAP-Rule" id="MF_00432"/>
    </source>
</evidence>
<protein>
    <recommendedName>
        <fullName evidence="1">Cytochrome b6-f complex subunit 5</fullName>
    </recommendedName>
    <alternativeName>
        <fullName evidence="1">Cytochrome b6-f complex subunit PetG</fullName>
    </alternativeName>
    <alternativeName>
        <fullName evidence="1">Cytochrome b6-f complex subunit V</fullName>
    </alternativeName>
</protein>
<geneLocation type="chloroplast"/>
<gene>
    <name evidence="1" type="primary">petG</name>
    <name type="ordered locus">OtCpg00600</name>
</gene>